<protein>
    <recommendedName>
        <fullName evidence="1">5'-methylthioadenosine/S-adenosylhomocysteine nucleosidase</fullName>
        <shortName evidence="1">MTA/SAH nucleosidase</shortName>
        <shortName evidence="1">MTAN</shortName>
        <ecNumber evidence="1">3.2.2.9</ecNumber>
    </recommendedName>
    <alternativeName>
        <fullName evidence="1">5'-deoxyadenosine nucleosidase</fullName>
        <shortName evidence="1">DOA nucleosidase</shortName>
        <shortName evidence="1">dAdo nucleosidase</shortName>
    </alternativeName>
    <alternativeName>
        <fullName evidence="1">5'-methylthioadenosine nucleosidase</fullName>
        <shortName evidence="1">MTA nucleosidase</shortName>
    </alternativeName>
    <alternativeName>
        <fullName evidence="1">S-adenosylhomocysteine nucleosidase</fullName>
        <shortName evidence="1">AdoHcy nucleosidase</shortName>
        <shortName evidence="1">SAH nucleosidase</shortName>
        <shortName evidence="1">SRH nucleosidase</shortName>
    </alternativeName>
</protein>
<reference key="1">
    <citation type="submission" date="2007-08" db="EMBL/GenBank/DDBJ databases">
        <authorList>
            <consortium name="The Vibrio harveyi Genome Sequencing Project"/>
            <person name="Bassler B."/>
            <person name="Clifton S.W."/>
            <person name="Fulton L."/>
            <person name="Delehaunty K."/>
            <person name="Fronick C."/>
            <person name="Harrison M."/>
            <person name="Markivic C."/>
            <person name="Fulton R."/>
            <person name="Tin-Wollam A.-M."/>
            <person name="Shah N."/>
            <person name="Pepin K."/>
            <person name="Nash W."/>
            <person name="Thiruvilangam P."/>
            <person name="Bhonagiri V."/>
            <person name="Waters C."/>
            <person name="Tu K.C."/>
            <person name="Irgon J."/>
            <person name="Wilson R.K."/>
        </authorList>
    </citation>
    <scope>NUCLEOTIDE SEQUENCE [LARGE SCALE GENOMIC DNA]</scope>
    <source>
        <strain>ATCC BAA-1116 / BB120</strain>
    </source>
</reference>
<dbReference type="EC" id="3.2.2.9" evidence="1"/>
<dbReference type="EMBL" id="CP000789">
    <property type="protein sequence ID" value="ABU69922.1"/>
    <property type="molecule type" value="Genomic_DNA"/>
</dbReference>
<dbReference type="RefSeq" id="WP_012127003.1">
    <property type="nucleotide sequence ID" value="NC_009783.1"/>
</dbReference>
<dbReference type="SMR" id="A7MXP2"/>
<dbReference type="KEGG" id="vha:VIBHAR_00923"/>
<dbReference type="PATRIC" id="fig|338187.25.peg.1698"/>
<dbReference type="UniPathway" id="UPA00904">
    <property type="reaction ID" value="UER00871"/>
</dbReference>
<dbReference type="Proteomes" id="UP000008152">
    <property type="component" value="Chromosome I"/>
</dbReference>
<dbReference type="GO" id="GO:0005829">
    <property type="term" value="C:cytosol"/>
    <property type="evidence" value="ECO:0007669"/>
    <property type="project" value="TreeGrafter"/>
</dbReference>
<dbReference type="GO" id="GO:0008782">
    <property type="term" value="F:adenosylhomocysteine nucleosidase activity"/>
    <property type="evidence" value="ECO:0007669"/>
    <property type="project" value="UniProtKB-UniRule"/>
</dbReference>
<dbReference type="GO" id="GO:0008930">
    <property type="term" value="F:methylthioadenosine nucleosidase activity"/>
    <property type="evidence" value="ECO:0007669"/>
    <property type="project" value="UniProtKB-UniRule"/>
</dbReference>
<dbReference type="GO" id="GO:0019509">
    <property type="term" value="P:L-methionine salvage from methylthioadenosine"/>
    <property type="evidence" value="ECO:0007669"/>
    <property type="project" value="UniProtKB-UniRule"/>
</dbReference>
<dbReference type="GO" id="GO:0019284">
    <property type="term" value="P:L-methionine salvage from S-adenosylmethionine"/>
    <property type="evidence" value="ECO:0007669"/>
    <property type="project" value="TreeGrafter"/>
</dbReference>
<dbReference type="GO" id="GO:0009164">
    <property type="term" value="P:nucleoside catabolic process"/>
    <property type="evidence" value="ECO:0007669"/>
    <property type="project" value="InterPro"/>
</dbReference>
<dbReference type="CDD" id="cd09008">
    <property type="entry name" value="MTAN"/>
    <property type="match status" value="1"/>
</dbReference>
<dbReference type="FunFam" id="3.40.50.1580:FF:000001">
    <property type="entry name" value="MTA/SAH nucleosidase family protein"/>
    <property type="match status" value="1"/>
</dbReference>
<dbReference type="Gene3D" id="3.40.50.1580">
    <property type="entry name" value="Nucleoside phosphorylase domain"/>
    <property type="match status" value="1"/>
</dbReference>
<dbReference type="HAMAP" id="MF_01684">
    <property type="entry name" value="Salvage_MtnN"/>
    <property type="match status" value="1"/>
</dbReference>
<dbReference type="InterPro" id="IPR010049">
    <property type="entry name" value="MTA_SAH_Nsdase"/>
</dbReference>
<dbReference type="InterPro" id="IPR000845">
    <property type="entry name" value="Nucleoside_phosphorylase_d"/>
</dbReference>
<dbReference type="InterPro" id="IPR035994">
    <property type="entry name" value="Nucleoside_phosphorylase_sf"/>
</dbReference>
<dbReference type="NCBIfam" id="TIGR01704">
    <property type="entry name" value="MTA_SAH-Nsdase"/>
    <property type="match status" value="1"/>
</dbReference>
<dbReference type="NCBIfam" id="NF004079">
    <property type="entry name" value="PRK05584.1"/>
    <property type="match status" value="1"/>
</dbReference>
<dbReference type="PANTHER" id="PTHR46832">
    <property type="entry name" value="5'-METHYLTHIOADENOSINE/S-ADENOSYLHOMOCYSTEINE NUCLEOSIDASE"/>
    <property type="match status" value="1"/>
</dbReference>
<dbReference type="PANTHER" id="PTHR46832:SF1">
    <property type="entry name" value="5'-METHYLTHIOADENOSINE_S-ADENOSYLHOMOCYSTEINE NUCLEOSIDASE"/>
    <property type="match status" value="1"/>
</dbReference>
<dbReference type="Pfam" id="PF01048">
    <property type="entry name" value="PNP_UDP_1"/>
    <property type="match status" value="1"/>
</dbReference>
<dbReference type="SUPFAM" id="SSF53167">
    <property type="entry name" value="Purine and uridine phosphorylases"/>
    <property type="match status" value="1"/>
</dbReference>
<feature type="chain" id="PRO_0000359386" description="5'-methylthioadenosine/S-adenosylhomocysteine nucleosidase">
    <location>
        <begin position="1"/>
        <end position="231"/>
    </location>
</feature>
<feature type="active site" description="Proton acceptor" evidence="1">
    <location>
        <position position="12"/>
    </location>
</feature>
<feature type="active site" description="Proton donor" evidence="1">
    <location>
        <position position="198"/>
    </location>
</feature>
<feature type="binding site" evidence="1">
    <location>
        <position position="78"/>
    </location>
    <ligand>
        <name>substrate</name>
    </ligand>
</feature>
<feature type="binding site" evidence="1">
    <location>
        <position position="153"/>
    </location>
    <ligand>
        <name>substrate</name>
    </ligand>
</feature>
<feature type="binding site" evidence="1">
    <location>
        <begin position="174"/>
        <end position="175"/>
    </location>
    <ligand>
        <name>substrate</name>
    </ligand>
</feature>
<gene>
    <name evidence="1" type="primary">mtnN</name>
    <name type="ordered locus">VIBHAR_00923</name>
</gene>
<accession>A7MXP2</accession>
<keyword id="KW-0028">Amino-acid biosynthesis</keyword>
<keyword id="KW-0378">Hydrolase</keyword>
<keyword id="KW-0486">Methionine biosynthesis</keyword>
<proteinExistence type="inferred from homology"/>
<organism>
    <name type="scientific">Vibrio campbellii (strain ATCC BAA-1116)</name>
    <dbReference type="NCBI Taxonomy" id="2902295"/>
    <lineage>
        <taxon>Bacteria</taxon>
        <taxon>Pseudomonadati</taxon>
        <taxon>Pseudomonadota</taxon>
        <taxon>Gammaproteobacteria</taxon>
        <taxon>Vibrionales</taxon>
        <taxon>Vibrionaceae</taxon>
        <taxon>Vibrio</taxon>
    </lineage>
</organism>
<evidence type="ECO:0000255" key="1">
    <source>
        <dbReference type="HAMAP-Rule" id="MF_01684"/>
    </source>
</evidence>
<comment type="function">
    <text evidence="1">Catalyzes the irreversible cleavage of the glycosidic bond in both 5'-methylthioadenosine (MTA) and S-adenosylhomocysteine (SAH/AdoHcy) to adenine and the corresponding thioribose, 5'-methylthioribose and S-ribosylhomocysteine, respectively. Also cleaves 5'-deoxyadenosine, a toxic by-product of radical S-adenosylmethionine (SAM) enzymes, into 5-deoxyribose and adenine.</text>
</comment>
<comment type="catalytic activity">
    <reaction evidence="1">
        <text>S-adenosyl-L-homocysteine + H2O = S-(5-deoxy-D-ribos-5-yl)-L-homocysteine + adenine</text>
        <dbReference type="Rhea" id="RHEA:17805"/>
        <dbReference type="ChEBI" id="CHEBI:15377"/>
        <dbReference type="ChEBI" id="CHEBI:16708"/>
        <dbReference type="ChEBI" id="CHEBI:57856"/>
        <dbReference type="ChEBI" id="CHEBI:58195"/>
        <dbReference type="EC" id="3.2.2.9"/>
    </reaction>
</comment>
<comment type="catalytic activity">
    <reaction evidence="1">
        <text>S-methyl-5'-thioadenosine + H2O = 5-(methylsulfanyl)-D-ribose + adenine</text>
        <dbReference type="Rhea" id="RHEA:13617"/>
        <dbReference type="ChEBI" id="CHEBI:15377"/>
        <dbReference type="ChEBI" id="CHEBI:16708"/>
        <dbReference type="ChEBI" id="CHEBI:17509"/>
        <dbReference type="ChEBI" id="CHEBI:78440"/>
        <dbReference type="EC" id="3.2.2.9"/>
    </reaction>
</comment>
<comment type="catalytic activity">
    <reaction evidence="1">
        <text>5'-deoxyadenosine + H2O = 5-deoxy-D-ribose + adenine</text>
        <dbReference type="Rhea" id="RHEA:29859"/>
        <dbReference type="ChEBI" id="CHEBI:15377"/>
        <dbReference type="ChEBI" id="CHEBI:16708"/>
        <dbReference type="ChEBI" id="CHEBI:17319"/>
        <dbReference type="ChEBI" id="CHEBI:149540"/>
        <dbReference type="EC" id="3.2.2.9"/>
    </reaction>
    <physiologicalReaction direction="left-to-right" evidence="1">
        <dbReference type="Rhea" id="RHEA:29860"/>
    </physiologicalReaction>
</comment>
<comment type="pathway">
    <text evidence="1">Amino-acid biosynthesis; L-methionine biosynthesis via salvage pathway; S-methyl-5-thio-alpha-D-ribose 1-phosphate from S-methyl-5'-thioadenosine (hydrolase route): step 1/2.</text>
</comment>
<comment type="similarity">
    <text evidence="1">Belongs to the PNP/UDP phosphorylase family. MtnN subfamily.</text>
</comment>
<name>MTNN_VIBC1</name>
<sequence>MKVGIIGAMEQEVTILKEAMTNCQTVSKAGCTFFSGQINGVDVVLLQSGIGKVAAAVGTTILLDEYQPDVVINTGSAGGFDSSLNLGDVVISTEVRHHDTDVTAFGYEMGQMAGQPAAFKADEKLMDLAEKALAQMENTHAVRGLICTGDAFVCTAERQEFIRKHFPSVIAVEMEASAIAQTCHQFNTPFVVVRAISDVADKESPMSFEEFLPLAAKSSSEMVCKMLELTK</sequence>